<feature type="chain" id="PRO_0000129425" description="Large ribosomal subunit protein uL23">
    <location>
        <begin position="1"/>
        <end position="101"/>
    </location>
</feature>
<dbReference type="EMBL" id="BA000022">
    <property type="protein sequence ID" value="BAA17347.1"/>
    <property type="molecule type" value="Genomic_DNA"/>
</dbReference>
<dbReference type="PIR" id="S77500">
    <property type="entry name" value="S77500"/>
</dbReference>
<dbReference type="SMR" id="P73318"/>
<dbReference type="FunCoup" id="P73318">
    <property type="interactions" value="358"/>
</dbReference>
<dbReference type="IntAct" id="P73318">
    <property type="interactions" value="1"/>
</dbReference>
<dbReference type="STRING" id="1148.gene:10498210"/>
<dbReference type="PaxDb" id="1148-1652425"/>
<dbReference type="EnsemblBacteria" id="BAA17347">
    <property type="protein sequence ID" value="BAA17347"/>
    <property type="gene ID" value="BAA17347"/>
</dbReference>
<dbReference type="KEGG" id="syn:sll1801"/>
<dbReference type="eggNOG" id="COG0089">
    <property type="taxonomic scope" value="Bacteria"/>
</dbReference>
<dbReference type="InParanoid" id="P73318"/>
<dbReference type="PhylomeDB" id="P73318"/>
<dbReference type="Proteomes" id="UP000001425">
    <property type="component" value="Chromosome"/>
</dbReference>
<dbReference type="GO" id="GO:0022625">
    <property type="term" value="C:cytosolic large ribosomal subunit"/>
    <property type="evidence" value="ECO:0000318"/>
    <property type="project" value="GO_Central"/>
</dbReference>
<dbReference type="GO" id="GO:0019843">
    <property type="term" value="F:rRNA binding"/>
    <property type="evidence" value="ECO:0007669"/>
    <property type="project" value="UniProtKB-UniRule"/>
</dbReference>
<dbReference type="GO" id="GO:0003735">
    <property type="term" value="F:structural constituent of ribosome"/>
    <property type="evidence" value="ECO:0000318"/>
    <property type="project" value="GO_Central"/>
</dbReference>
<dbReference type="GO" id="GO:0006412">
    <property type="term" value="P:translation"/>
    <property type="evidence" value="ECO:0007669"/>
    <property type="project" value="UniProtKB-UniRule"/>
</dbReference>
<dbReference type="FunFam" id="3.30.70.330:FF:000001">
    <property type="entry name" value="50S ribosomal protein L23"/>
    <property type="match status" value="1"/>
</dbReference>
<dbReference type="Gene3D" id="3.30.70.330">
    <property type="match status" value="1"/>
</dbReference>
<dbReference type="HAMAP" id="MF_01369_B">
    <property type="entry name" value="Ribosomal_uL23_B"/>
    <property type="match status" value="1"/>
</dbReference>
<dbReference type="InterPro" id="IPR012677">
    <property type="entry name" value="Nucleotide-bd_a/b_plait_sf"/>
</dbReference>
<dbReference type="InterPro" id="IPR013025">
    <property type="entry name" value="Ribosomal_uL23-like"/>
</dbReference>
<dbReference type="InterPro" id="IPR012678">
    <property type="entry name" value="Ribosomal_uL23/eL15/eS24_sf"/>
</dbReference>
<dbReference type="InterPro" id="IPR001014">
    <property type="entry name" value="Ribosomal_uL23_CS"/>
</dbReference>
<dbReference type="NCBIfam" id="NF004363">
    <property type="entry name" value="PRK05738.2-4"/>
    <property type="match status" value="1"/>
</dbReference>
<dbReference type="NCBIfam" id="NF004368">
    <property type="entry name" value="PRK05738.3-4"/>
    <property type="match status" value="1"/>
</dbReference>
<dbReference type="PANTHER" id="PTHR11620">
    <property type="entry name" value="60S RIBOSOMAL PROTEIN L23A"/>
    <property type="match status" value="1"/>
</dbReference>
<dbReference type="Pfam" id="PF00276">
    <property type="entry name" value="Ribosomal_L23"/>
    <property type="match status" value="1"/>
</dbReference>
<dbReference type="SUPFAM" id="SSF54189">
    <property type="entry name" value="Ribosomal proteins S24e, L23 and L15e"/>
    <property type="match status" value="1"/>
</dbReference>
<dbReference type="PROSITE" id="PS00050">
    <property type="entry name" value="RIBOSOMAL_L23"/>
    <property type="match status" value="1"/>
</dbReference>
<gene>
    <name evidence="1" type="primary">rplW</name>
    <name evidence="1" type="synonym">rpl23</name>
    <name type="ordered locus">sll1801</name>
</gene>
<protein>
    <recommendedName>
        <fullName evidence="1">Large ribosomal subunit protein uL23</fullName>
    </recommendedName>
    <alternativeName>
        <fullName evidence="2">50S ribosomal protein L23</fullName>
    </alternativeName>
</protein>
<organism>
    <name type="scientific">Synechocystis sp. (strain ATCC 27184 / PCC 6803 / Kazusa)</name>
    <dbReference type="NCBI Taxonomy" id="1111708"/>
    <lineage>
        <taxon>Bacteria</taxon>
        <taxon>Bacillati</taxon>
        <taxon>Cyanobacteriota</taxon>
        <taxon>Cyanophyceae</taxon>
        <taxon>Synechococcales</taxon>
        <taxon>Merismopediaceae</taxon>
        <taxon>Synechocystis</taxon>
    </lineage>
</organism>
<sequence>MSKVIDQRRLADLIIKPIVTEKATLQLEDNKYVFDVRPEATKPEIKAAIELLFDVKVTGVNTARMPRRKKRVGRFMGFKAQVKRAVVTLKEGDSIQLFPDV</sequence>
<keyword id="KW-1185">Reference proteome</keyword>
<keyword id="KW-0687">Ribonucleoprotein</keyword>
<keyword id="KW-0689">Ribosomal protein</keyword>
<keyword id="KW-0694">RNA-binding</keyword>
<keyword id="KW-0699">rRNA-binding</keyword>
<proteinExistence type="inferred from homology"/>
<reference key="1">
    <citation type="journal article" date="1996" name="DNA Res.">
        <title>Sequence analysis of the genome of the unicellular cyanobacterium Synechocystis sp. strain PCC6803. II. Sequence determination of the entire genome and assignment of potential protein-coding regions.</title>
        <authorList>
            <person name="Kaneko T."/>
            <person name="Sato S."/>
            <person name="Kotani H."/>
            <person name="Tanaka A."/>
            <person name="Asamizu E."/>
            <person name="Nakamura Y."/>
            <person name="Miyajima N."/>
            <person name="Hirosawa M."/>
            <person name="Sugiura M."/>
            <person name="Sasamoto S."/>
            <person name="Kimura T."/>
            <person name="Hosouchi T."/>
            <person name="Matsuno A."/>
            <person name="Muraki A."/>
            <person name="Nakazaki N."/>
            <person name="Naruo K."/>
            <person name="Okumura S."/>
            <person name="Shimpo S."/>
            <person name="Takeuchi C."/>
            <person name="Wada T."/>
            <person name="Watanabe A."/>
            <person name="Yamada M."/>
            <person name="Yasuda M."/>
            <person name="Tabata S."/>
        </authorList>
    </citation>
    <scope>NUCLEOTIDE SEQUENCE [LARGE SCALE GENOMIC DNA]</scope>
    <source>
        <strain>ATCC 27184 / PCC 6803 / Kazusa</strain>
    </source>
</reference>
<accession>P73318</accession>
<name>RL23_SYNY3</name>
<comment type="function">
    <text evidence="1">One of the early assembly proteins it binds 23S rRNA. One of the proteins that surrounds the polypeptide exit tunnel on the outside of the ribosome. Forms the main docking site for trigger factor binding to the ribosome.</text>
</comment>
<comment type="subunit">
    <text evidence="1">Part of the 50S ribosomal subunit. Contacts protein L29, and trigger factor when it is bound to the ribosome.</text>
</comment>
<comment type="similarity">
    <text evidence="1">Belongs to the universal ribosomal protein uL23 family.</text>
</comment>
<evidence type="ECO:0000255" key="1">
    <source>
        <dbReference type="HAMAP-Rule" id="MF_01369"/>
    </source>
</evidence>
<evidence type="ECO:0000305" key="2"/>